<feature type="chain" id="PRO_0000377038" description="Two-component response regulator ORR30">
    <location>
        <begin position="1"/>
        <end position="341"/>
    </location>
</feature>
<feature type="domain" description="Response regulatory" evidence="2">
    <location>
        <begin position="12"/>
        <end position="127"/>
    </location>
</feature>
<feature type="domain" description="HTH myb-type" evidence="3">
    <location>
        <begin position="195"/>
        <end position="254"/>
    </location>
</feature>
<feature type="DNA-binding region" description="H-T-H motif" evidence="3">
    <location>
        <begin position="225"/>
        <end position="250"/>
    </location>
</feature>
<feature type="modified residue" description="4-aspartylphosphate" evidence="2">
    <location>
        <position position="63"/>
    </location>
</feature>
<feature type="sequence variant" description="In strain: cv. Taichung 65; strong reduction of DNA-binding activity." evidence="4">
    <original>G</original>
    <variation>R</variation>
    <location>
        <position position="219"/>
    </location>
</feature>
<organism>
    <name type="scientific">Oryza sativa subsp. japonica</name>
    <name type="common">Rice</name>
    <dbReference type="NCBI Taxonomy" id="39947"/>
    <lineage>
        <taxon>Eukaryota</taxon>
        <taxon>Viridiplantae</taxon>
        <taxon>Streptophyta</taxon>
        <taxon>Embryophyta</taxon>
        <taxon>Tracheophyta</taxon>
        <taxon>Spermatophyta</taxon>
        <taxon>Magnoliopsida</taxon>
        <taxon>Liliopsida</taxon>
        <taxon>Poales</taxon>
        <taxon>Poaceae</taxon>
        <taxon>BOP clade</taxon>
        <taxon>Oryzoideae</taxon>
        <taxon>Oryzeae</taxon>
        <taxon>Oryzinae</taxon>
        <taxon>Oryza</taxon>
        <taxon>Oryza sativa</taxon>
    </lineage>
</organism>
<name>EHD1_ORYSJ</name>
<dbReference type="EMBL" id="AB092506">
    <property type="protein sequence ID" value="BAC77078.1"/>
    <property type="molecule type" value="Genomic_DNA"/>
</dbReference>
<dbReference type="EMBL" id="AB092507">
    <property type="protein sequence ID" value="BAC77079.1"/>
    <property type="molecule type" value="Genomic_DNA"/>
</dbReference>
<dbReference type="EMBL" id="AC027038">
    <property type="protein sequence ID" value="AAN05536.1"/>
    <property type="status" value="ALT_SEQ"/>
    <property type="molecule type" value="Genomic_DNA"/>
</dbReference>
<dbReference type="EMBL" id="DP000086">
    <property type="protein sequence ID" value="AAP54164.2"/>
    <property type="status" value="ALT_SEQ"/>
    <property type="molecule type" value="Genomic_DNA"/>
</dbReference>
<dbReference type="EMBL" id="AP008207">
    <property type="status" value="NOT_ANNOTATED_CDS"/>
    <property type="molecule type" value="Genomic_DNA"/>
</dbReference>
<dbReference type="EMBL" id="AP014966">
    <property type="protein sequence ID" value="BAT11189.1"/>
    <property type="molecule type" value="Genomic_DNA"/>
</dbReference>
<dbReference type="EMBL" id="CM000147">
    <property type="protein sequence ID" value="EEE51097.1"/>
    <property type="status" value="ALT_SEQ"/>
    <property type="molecule type" value="Genomic_DNA"/>
</dbReference>
<dbReference type="RefSeq" id="XP_015613931.1">
    <property type="nucleotide sequence ID" value="XM_015758445.1"/>
</dbReference>
<dbReference type="RefSeq" id="XP_015613932.1">
    <property type="nucleotide sequence ID" value="XM_015758446.1"/>
</dbReference>
<dbReference type="RefSeq" id="XP_015613933.1">
    <property type="nucleotide sequence ID" value="XM_015758447.1"/>
</dbReference>
<dbReference type="SMR" id="Q7Y0W5"/>
<dbReference type="FunCoup" id="Q7Y0W5">
    <property type="interactions" value="17"/>
</dbReference>
<dbReference type="STRING" id="39947.Q7Y0W5"/>
<dbReference type="PaxDb" id="39947-Q7Y0W5"/>
<dbReference type="EnsemblPlants" id="Os10t0463400-01">
    <property type="protein sequence ID" value="Os10t0463400-01"/>
    <property type="gene ID" value="Os10g0463400"/>
</dbReference>
<dbReference type="Gramene" id="Os10t0463400-01">
    <property type="protein sequence ID" value="Os10t0463400-01"/>
    <property type="gene ID" value="Os10g0463400"/>
</dbReference>
<dbReference type="eggNOG" id="KOG1601">
    <property type="taxonomic scope" value="Eukaryota"/>
</dbReference>
<dbReference type="HOGENOM" id="CLU_957670_0_0_1"/>
<dbReference type="InParanoid" id="Q7Y0W5"/>
<dbReference type="OMA" id="FRWDSDK"/>
<dbReference type="OrthoDB" id="60033at2759"/>
<dbReference type="PlantReactome" id="R-OSA-8934036">
    <property type="pathway name" value="Long day regulated expression of florigens"/>
</dbReference>
<dbReference type="PlantReactome" id="R-OSA-8934108">
    <property type="pathway name" value="Short day regulated expression of florigens"/>
</dbReference>
<dbReference type="Proteomes" id="UP000000763">
    <property type="component" value="Chromosome 1"/>
</dbReference>
<dbReference type="Proteomes" id="UP000000763">
    <property type="component" value="Chromosome 10"/>
</dbReference>
<dbReference type="Proteomes" id="UP000007752">
    <property type="component" value="Chromosome 10"/>
</dbReference>
<dbReference type="Proteomes" id="UP000059680">
    <property type="component" value="Chromosome 10"/>
</dbReference>
<dbReference type="GO" id="GO:0005634">
    <property type="term" value="C:nucleus"/>
    <property type="evidence" value="ECO:0007669"/>
    <property type="project" value="UniProtKB-SubCell"/>
</dbReference>
<dbReference type="GO" id="GO:0003677">
    <property type="term" value="F:DNA binding"/>
    <property type="evidence" value="ECO:0007669"/>
    <property type="project" value="UniProtKB-KW"/>
</dbReference>
<dbReference type="GO" id="GO:0003700">
    <property type="term" value="F:DNA-binding transcription factor activity"/>
    <property type="evidence" value="ECO:0007669"/>
    <property type="project" value="InterPro"/>
</dbReference>
<dbReference type="GO" id="GO:0009736">
    <property type="term" value="P:cytokinin-activated signaling pathway"/>
    <property type="evidence" value="ECO:0007669"/>
    <property type="project" value="UniProtKB-KW"/>
</dbReference>
<dbReference type="GO" id="GO:0009908">
    <property type="term" value="P:flower development"/>
    <property type="evidence" value="ECO:0007669"/>
    <property type="project" value="UniProtKB-KW"/>
</dbReference>
<dbReference type="GO" id="GO:0000160">
    <property type="term" value="P:phosphorelay signal transduction system"/>
    <property type="evidence" value="ECO:0007669"/>
    <property type="project" value="UniProtKB-KW"/>
</dbReference>
<dbReference type="GO" id="GO:0048576">
    <property type="term" value="P:positive regulation of short-day photoperiodism, flowering"/>
    <property type="evidence" value="ECO:0000315"/>
    <property type="project" value="UniProtKB"/>
</dbReference>
<dbReference type="CDD" id="cd17584">
    <property type="entry name" value="REC_typeB_ARR-like"/>
    <property type="match status" value="1"/>
</dbReference>
<dbReference type="FunFam" id="1.10.10.60:FF:000007">
    <property type="entry name" value="Two-component response regulator"/>
    <property type="match status" value="1"/>
</dbReference>
<dbReference type="Gene3D" id="3.40.50.2300">
    <property type="match status" value="1"/>
</dbReference>
<dbReference type="Gene3D" id="1.10.10.60">
    <property type="entry name" value="Homeodomain-like"/>
    <property type="match status" value="1"/>
</dbReference>
<dbReference type="InterPro" id="IPR045279">
    <property type="entry name" value="ARR-like"/>
</dbReference>
<dbReference type="InterPro" id="IPR011006">
    <property type="entry name" value="CheY-like_superfamily"/>
</dbReference>
<dbReference type="InterPro" id="IPR009057">
    <property type="entry name" value="Homeodomain-like_sf"/>
</dbReference>
<dbReference type="InterPro" id="IPR017930">
    <property type="entry name" value="Myb_dom"/>
</dbReference>
<dbReference type="InterPro" id="IPR006447">
    <property type="entry name" value="Myb_dom_plants"/>
</dbReference>
<dbReference type="InterPro" id="IPR017053">
    <property type="entry name" value="Response_reg_B-typ_pln"/>
</dbReference>
<dbReference type="InterPro" id="IPR001005">
    <property type="entry name" value="SANT/Myb"/>
</dbReference>
<dbReference type="InterPro" id="IPR001789">
    <property type="entry name" value="Sig_transdc_resp-reg_receiver"/>
</dbReference>
<dbReference type="NCBIfam" id="TIGR01557">
    <property type="entry name" value="myb_SHAQKYF"/>
    <property type="match status" value="1"/>
</dbReference>
<dbReference type="PANTHER" id="PTHR43874">
    <property type="entry name" value="TWO-COMPONENT RESPONSE REGULATOR"/>
    <property type="match status" value="1"/>
</dbReference>
<dbReference type="PANTHER" id="PTHR43874:SF65">
    <property type="entry name" value="TWO-COMPONENT RESPONSE REGULATOR ORR30"/>
    <property type="match status" value="1"/>
</dbReference>
<dbReference type="Pfam" id="PF00249">
    <property type="entry name" value="Myb_DNA-binding"/>
    <property type="match status" value="1"/>
</dbReference>
<dbReference type="Pfam" id="PF00072">
    <property type="entry name" value="Response_reg"/>
    <property type="match status" value="1"/>
</dbReference>
<dbReference type="PIRSF" id="PIRSF036392">
    <property type="entry name" value="RR_ARR_type-B"/>
    <property type="match status" value="1"/>
</dbReference>
<dbReference type="SMART" id="SM00448">
    <property type="entry name" value="REC"/>
    <property type="match status" value="1"/>
</dbReference>
<dbReference type="SUPFAM" id="SSF52172">
    <property type="entry name" value="CheY-like"/>
    <property type="match status" value="1"/>
</dbReference>
<dbReference type="SUPFAM" id="SSF46689">
    <property type="entry name" value="Homeodomain-like"/>
    <property type="match status" value="1"/>
</dbReference>
<dbReference type="PROSITE" id="PS51294">
    <property type="entry name" value="HTH_MYB"/>
    <property type="match status" value="1"/>
</dbReference>
<dbReference type="PROSITE" id="PS50110">
    <property type="entry name" value="RESPONSE_REGULATORY"/>
    <property type="match status" value="1"/>
</dbReference>
<evidence type="ECO:0000250" key="1">
    <source>
        <dbReference type="UniProtKB" id="Q940D0"/>
    </source>
</evidence>
<evidence type="ECO:0000255" key="2">
    <source>
        <dbReference type="PROSITE-ProRule" id="PRU00169"/>
    </source>
</evidence>
<evidence type="ECO:0000255" key="3">
    <source>
        <dbReference type="PROSITE-ProRule" id="PRU00625"/>
    </source>
</evidence>
<evidence type="ECO:0000269" key="4">
    <source>
    </source>
</evidence>
<evidence type="ECO:0000303" key="5">
    <source>
    </source>
</evidence>
<evidence type="ECO:0000303" key="6">
    <source>
    </source>
</evidence>
<evidence type="ECO:0000305" key="7"/>
<evidence type="ECO:0000312" key="8">
    <source>
        <dbReference type="EMBL" id="AAP54164.2"/>
    </source>
</evidence>
<evidence type="ECO:0000312" key="9">
    <source>
        <dbReference type="EMBL" id="BAT11189.1"/>
    </source>
</evidence>
<evidence type="ECO:0000312" key="10">
    <source>
        <dbReference type="EMBL" id="EEE51097.1"/>
    </source>
</evidence>
<reference key="1">
    <citation type="journal article" date="2004" name="Genes Dev.">
        <title>Ehd1, a B-type response regulator in rice, confers short-day promotion of flowering and controls FT-like gene expression independently of Hd1.</title>
        <authorList>
            <person name="Doi K."/>
            <person name="Izawa T."/>
            <person name="Fuse T."/>
            <person name="Yamanouchi U."/>
            <person name="Kubo T."/>
            <person name="Shimatani Z."/>
            <person name="Yano M."/>
            <person name="Yoshimura A."/>
        </authorList>
    </citation>
    <scope>NUCLEOTIDE SEQUENCE [GENOMIC DNA]</scope>
    <scope>FUNCTION</scope>
    <scope>INDUCTION</scope>
    <scope>POLYMORPHISM</scope>
    <scope>VARIANT ARG-219</scope>
    <scope>CHARACTERIZATION OF VARIANT ARG-219</scope>
    <source>
        <strain>cv. Nipponbare</strain>
        <strain>cv. Taichung 65</strain>
    </source>
</reference>
<reference key="2">
    <citation type="journal article" date="2003" name="Science">
        <title>In-depth view of structure, activity, and evolution of rice chromosome 10.</title>
        <authorList>
            <person name="Yu Y."/>
            <person name="Rambo T."/>
            <person name="Currie J."/>
            <person name="Saski C."/>
            <person name="Kim H.-R."/>
            <person name="Collura K."/>
            <person name="Thompson S."/>
            <person name="Simmons J."/>
            <person name="Yang T.-J."/>
            <person name="Nah G."/>
            <person name="Patel A.J."/>
            <person name="Thurmond S."/>
            <person name="Henry D."/>
            <person name="Oates R."/>
            <person name="Palmer M."/>
            <person name="Pries G."/>
            <person name="Gibson J."/>
            <person name="Anderson H."/>
            <person name="Paradkar M."/>
            <person name="Crane L."/>
            <person name="Dale J."/>
            <person name="Carver M.B."/>
            <person name="Wood T."/>
            <person name="Frisch D."/>
            <person name="Engler F."/>
            <person name="Soderlund C."/>
            <person name="Palmer L.E."/>
            <person name="Teytelman L."/>
            <person name="Nascimento L."/>
            <person name="De la Bastide M."/>
            <person name="Spiegel L."/>
            <person name="Ware D."/>
            <person name="O'Shaughnessy A."/>
            <person name="Dike S."/>
            <person name="Dedhia N."/>
            <person name="Preston R."/>
            <person name="Huang E."/>
            <person name="Ferraro K."/>
            <person name="Kuit K."/>
            <person name="Miller B."/>
            <person name="Zutavern T."/>
            <person name="Katzenberger F."/>
            <person name="Muller S."/>
            <person name="Balija V."/>
            <person name="Martienssen R.A."/>
            <person name="Stein L."/>
            <person name="Minx P."/>
            <person name="Johnson D."/>
            <person name="Cordum H."/>
            <person name="Mardis E."/>
            <person name="Cheng Z."/>
            <person name="Jiang J."/>
            <person name="Wilson R."/>
            <person name="McCombie W.R."/>
            <person name="Wing R.A."/>
            <person name="Yuan Q."/>
            <person name="Ouyang S."/>
            <person name="Liu J."/>
            <person name="Jones K.M."/>
            <person name="Gansberger K."/>
            <person name="Moffat K."/>
            <person name="Hill J."/>
            <person name="Tsitrin T."/>
            <person name="Overton L."/>
            <person name="Bera J."/>
            <person name="Kim M."/>
            <person name="Jin S."/>
            <person name="Tallon L."/>
            <person name="Ciecko A."/>
            <person name="Pai G."/>
            <person name="Van Aken S."/>
            <person name="Utterback T."/>
            <person name="Reidmuller S."/>
            <person name="Bormann J."/>
            <person name="Feldblyum T."/>
            <person name="Hsiao J."/>
            <person name="Zismann V."/>
            <person name="Blunt S."/>
            <person name="de Vazeille A.R."/>
            <person name="Shaffer T."/>
            <person name="Koo H."/>
            <person name="Suh B."/>
            <person name="Yang Q."/>
            <person name="Haas B."/>
            <person name="Peterson J."/>
            <person name="Pertea M."/>
            <person name="Volfovsky N."/>
            <person name="Wortman J."/>
            <person name="White O."/>
            <person name="Salzberg S.L."/>
            <person name="Fraser C.M."/>
            <person name="Buell C.R."/>
            <person name="Messing J."/>
            <person name="Song R."/>
            <person name="Fuks G."/>
            <person name="Llaca V."/>
            <person name="Kovchak S."/>
            <person name="Young S."/>
            <person name="Bowers J.E."/>
            <person name="Paterson A.H."/>
            <person name="Johns M.A."/>
            <person name="Mao L."/>
            <person name="Pan H."/>
            <person name="Dean R.A."/>
        </authorList>
    </citation>
    <scope>NUCLEOTIDE SEQUENCE [LARGE SCALE GENOMIC DNA]</scope>
    <source>
        <strain>cv. Nipponbare</strain>
    </source>
</reference>
<reference key="3">
    <citation type="journal article" date="2005" name="Nature">
        <title>The map-based sequence of the rice genome.</title>
        <authorList>
            <consortium name="International rice genome sequencing project (IRGSP)"/>
        </authorList>
    </citation>
    <scope>NUCLEOTIDE SEQUENCE [LARGE SCALE GENOMIC DNA]</scope>
    <source>
        <strain>cv. Nipponbare</strain>
    </source>
</reference>
<reference key="4">
    <citation type="journal article" date="2008" name="Nucleic Acids Res.">
        <title>The rice annotation project database (RAP-DB): 2008 update.</title>
        <authorList>
            <consortium name="The rice annotation project (RAP)"/>
        </authorList>
    </citation>
    <scope>GENOME REANNOTATION</scope>
    <source>
        <strain>cv. Nipponbare</strain>
    </source>
</reference>
<reference key="5">
    <citation type="journal article" date="2013" name="Rice">
        <title>Improvement of the Oryza sativa Nipponbare reference genome using next generation sequence and optical map data.</title>
        <authorList>
            <person name="Kawahara Y."/>
            <person name="de la Bastide M."/>
            <person name="Hamilton J.P."/>
            <person name="Kanamori H."/>
            <person name="McCombie W.R."/>
            <person name="Ouyang S."/>
            <person name="Schwartz D.C."/>
            <person name="Tanaka T."/>
            <person name="Wu J."/>
            <person name="Zhou S."/>
            <person name="Childs K.L."/>
            <person name="Davidson R.M."/>
            <person name="Lin H."/>
            <person name="Quesada-Ocampo L."/>
            <person name="Vaillancourt B."/>
            <person name="Sakai H."/>
            <person name="Lee S.S."/>
            <person name="Kim J."/>
            <person name="Numa H."/>
            <person name="Itoh T."/>
            <person name="Buell C.R."/>
            <person name="Matsumoto T."/>
        </authorList>
    </citation>
    <scope>GENOME REANNOTATION</scope>
    <source>
        <strain>cv. Nipponbare</strain>
    </source>
</reference>
<reference key="6">
    <citation type="journal article" date="2005" name="PLoS Biol.">
        <title>The genomes of Oryza sativa: a history of duplications.</title>
        <authorList>
            <person name="Yu J."/>
            <person name="Wang J."/>
            <person name="Lin W."/>
            <person name="Li S."/>
            <person name="Li H."/>
            <person name="Zhou J."/>
            <person name="Ni P."/>
            <person name="Dong W."/>
            <person name="Hu S."/>
            <person name="Zeng C."/>
            <person name="Zhang J."/>
            <person name="Zhang Y."/>
            <person name="Li R."/>
            <person name="Xu Z."/>
            <person name="Li S."/>
            <person name="Li X."/>
            <person name="Zheng H."/>
            <person name="Cong L."/>
            <person name="Lin L."/>
            <person name="Yin J."/>
            <person name="Geng J."/>
            <person name="Li G."/>
            <person name="Shi J."/>
            <person name="Liu J."/>
            <person name="Lv H."/>
            <person name="Li J."/>
            <person name="Wang J."/>
            <person name="Deng Y."/>
            <person name="Ran L."/>
            <person name="Shi X."/>
            <person name="Wang X."/>
            <person name="Wu Q."/>
            <person name="Li C."/>
            <person name="Ren X."/>
            <person name="Wang J."/>
            <person name="Wang X."/>
            <person name="Li D."/>
            <person name="Liu D."/>
            <person name="Zhang X."/>
            <person name="Ji Z."/>
            <person name="Zhao W."/>
            <person name="Sun Y."/>
            <person name="Zhang Z."/>
            <person name="Bao J."/>
            <person name="Han Y."/>
            <person name="Dong L."/>
            <person name="Ji J."/>
            <person name="Chen P."/>
            <person name="Wu S."/>
            <person name="Liu J."/>
            <person name="Xiao Y."/>
            <person name="Bu D."/>
            <person name="Tan J."/>
            <person name="Yang L."/>
            <person name="Ye C."/>
            <person name="Zhang J."/>
            <person name="Xu J."/>
            <person name="Zhou Y."/>
            <person name="Yu Y."/>
            <person name="Zhang B."/>
            <person name="Zhuang S."/>
            <person name="Wei H."/>
            <person name="Liu B."/>
            <person name="Lei M."/>
            <person name="Yu H."/>
            <person name="Li Y."/>
            <person name="Xu H."/>
            <person name="Wei S."/>
            <person name="He X."/>
            <person name="Fang L."/>
            <person name="Zhang Z."/>
            <person name="Zhang Y."/>
            <person name="Huang X."/>
            <person name="Su Z."/>
            <person name="Tong W."/>
            <person name="Li J."/>
            <person name="Tong Z."/>
            <person name="Li S."/>
            <person name="Ye J."/>
            <person name="Wang L."/>
            <person name="Fang L."/>
            <person name="Lei T."/>
            <person name="Chen C.-S."/>
            <person name="Chen H.-C."/>
            <person name="Xu Z."/>
            <person name="Li H."/>
            <person name="Huang H."/>
            <person name="Zhang F."/>
            <person name="Xu H."/>
            <person name="Li N."/>
            <person name="Zhao C."/>
            <person name="Li S."/>
            <person name="Dong L."/>
            <person name="Huang Y."/>
            <person name="Li L."/>
            <person name="Xi Y."/>
            <person name="Qi Q."/>
            <person name="Li W."/>
            <person name="Zhang B."/>
            <person name="Hu W."/>
            <person name="Zhang Y."/>
            <person name="Tian X."/>
            <person name="Jiao Y."/>
            <person name="Liang X."/>
            <person name="Jin J."/>
            <person name="Gao L."/>
            <person name="Zheng W."/>
            <person name="Hao B."/>
            <person name="Liu S.-M."/>
            <person name="Wang W."/>
            <person name="Yuan L."/>
            <person name="Cao M."/>
            <person name="McDermott J."/>
            <person name="Samudrala R."/>
            <person name="Wang J."/>
            <person name="Wong G.K.-S."/>
            <person name="Yang H."/>
        </authorList>
    </citation>
    <scope>NUCLEOTIDE SEQUENCE [LARGE SCALE GENOMIC DNA]</scope>
    <source>
        <strain>cv. Nipponbare</strain>
    </source>
</reference>
<reference key="7">
    <citation type="journal article" date="2007" name="Plant Physiol.">
        <title>Nomenclature for two-component signaling elements of rice.</title>
        <authorList>
            <person name="Schaller G.E."/>
            <person name="Doi K."/>
            <person name="Hwang I."/>
            <person name="Kieber J.J."/>
            <person name="Khurana J.P."/>
            <person name="Kurata N."/>
            <person name="Mizuno T."/>
            <person name="Pareek A."/>
            <person name="Shiu S.H."/>
            <person name="Wu P."/>
            <person name="Yip W.K."/>
        </authorList>
    </citation>
    <scope>GENE FAMILY</scope>
    <scope>NOMENCLATURE</scope>
</reference>
<accession>Q7Y0W5</accession>
<accession>A0A0P0XVG5</accession>
<accession>Q7G2N3</accession>
<accession>Q7Y0W4</accession>
<accession>Q8H908</accession>
<protein>
    <recommendedName>
        <fullName evidence="7">Two-component response regulator ORR30</fullName>
    </recommendedName>
    <alternativeName>
        <fullName evidence="5">Protein EARLY HEADING DATE 1</fullName>
    </alternativeName>
    <alternativeName>
        <fullName evidence="7">Two-component response regulator EHD1</fullName>
    </alternativeName>
</protein>
<gene>
    <name evidence="5" type="primary">EHD1</name>
    <name evidence="6" type="synonym">RR30</name>
    <name evidence="9" type="ordered locus">Os10g0463400</name>
    <name evidence="8" type="ordered locus">LOC_Os10g32600</name>
    <name evidence="10" type="ORF">OsJ_31808</name>
    <name type="ORF">OSJNBa0071K18.25</name>
</gene>
<sequence length="341" mass="38863">MDHRELWPYGLRVLVIDDDCSYLSVMEDLLLKCSYKVTTYKNVREAVPFILDNPQIVDLVISDAFFPTEDGLLILQEVTSKFGIPTVIMASSGDTNTVMKYVANGAFDFLLKPVRIEELSNIWQHIFRKQMQDHKNNNMVGNLEKPGHPPSILAMARATPATTRSTATEASLAPLENEVRDDMVNYNGEITDIRDLGKSRLTWTTQLHRQFIAAVNHLGEDKAVPKKILGIMKVKHLTREQVASHLQKYRMQLKKSIPTTSKHGATLSSTALDKTQDHPSRSQYFNQDGCKEIMDYSLPRDDLSSGSECMLEELNDYSSEGFQDFRWDSDKQEYGPCFWNF</sequence>
<proteinExistence type="evidence at protein level"/>
<comment type="function">
    <text evidence="1 4">Transcriptional activator that acts as a floral inducer to promote short-day (SD) flowering pathway. Activates HD3A and other FT-like genes independently from HD1. May also activate MADS-box transcription factors involved in flowering regulation (PubMed:15078816). Functions as a response regulator involved in His-to-Asp phosphorelay signal transduction system. Phosphorylation of the Asp residue in the receiver domain activates the ability of the protein to promote the transcription of target genes. May directly activate some type-A response regulators in response to cytokinins (By similarity).</text>
</comment>
<comment type="subcellular location">
    <subcellularLocation>
        <location evidence="3">Nucleus</location>
    </subcellularLocation>
</comment>
<comment type="induction">
    <text evidence="4">Daily oscillation and diurnal expression in plants grown in short day (SD) but not in long day (LD) conditions.</text>
</comment>
<comment type="PTM">
    <text>Two-component system major event consists of a His-to-Asp phosphorelay between a sensor histidine kinase (HK) and a response regulator (RR). In plants, the His-to-Asp phosphorelay involves an additional intermediate named Histidine-containing phosphotransfer protein (HPt). This multistep phosphorelay consists of a His-Asp-His-Asp sequential transfer of a phosphate group between first a His and an Asp of the HK protein, followed by the transfer to a conserved His of the HPt protein and finally the transfer to an Asp in the receiver domain of the RR protein.</text>
</comment>
<comment type="polymorphism">
    <text>The cultivar Taichung 65 exhibits a long basic vegetative growth and reduced response to photoperiod due to loss-of-function alleles of HD1 and EHD1. This confers almost constant and sufficient vegetative growth periods even in low latitudes where short photoperiod conditions continue almost throughout the year.</text>
</comment>
<comment type="similarity">
    <text evidence="7">Belongs to the ARR family. Type-B subfamily.</text>
</comment>
<comment type="sequence caution" evidence="7">
    <conflict type="erroneous gene model prediction">
        <sequence resource="EMBL-CDS" id="AAN05536"/>
    </conflict>
</comment>
<comment type="sequence caution" evidence="7">
    <conflict type="erroneous gene model prediction">
        <sequence resource="EMBL-CDS" id="AAP54164"/>
    </conflict>
</comment>
<comment type="sequence caution" evidence="7">
    <conflict type="erroneous gene model prediction">
        <sequence resource="EMBL-CDS" id="EEE51097"/>
    </conflict>
</comment>
<keyword id="KW-0010">Activator</keyword>
<keyword id="KW-0932">Cytokinin signaling pathway</keyword>
<keyword id="KW-0238">DNA-binding</keyword>
<keyword id="KW-0287">Flowering</keyword>
<keyword id="KW-0539">Nucleus</keyword>
<keyword id="KW-0597">Phosphoprotein</keyword>
<keyword id="KW-1185">Reference proteome</keyword>
<keyword id="KW-0804">Transcription</keyword>
<keyword id="KW-0805">Transcription regulation</keyword>
<keyword id="KW-0902">Two-component regulatory system</keyword>